<name>LNT_BORPA</name>
<comment type="function">
    <text evidence="1">Catalyzes the phospholipid dependent N-acylation of the N-terminal cysteine of apolipoprotein, the last step in lipoprotein maturation.</text>
</comment>
<comment type="catalytic activity">
    <reaction evidence="1">
        <text>N-terminal S-1,2-diacyl-sn-glyceryl-L-cysteinyl-[lipoprotein] + a glycerophospholipid = N-acyl-S-1,2-diacyl-sn-glyceryl-L-cysteinyl-[lipoprotein] + a 2-acyl-sn-glycero-3-phospholipid + H(+)</text>
        <dbReference type="Rhea" id="RHEA:48228"/>
        <dbReference type="Rhea" id="RHEA-COMP:14681"/>
        <dbReference type="Rhea" id="RHEA-COMP:14684"/>
        <dbReference type="ChEBI" id="CHEBI:15378"/>
        <dbReference type="ChEBI" id="CHEBI:136912"/>
        <dbReference type="ChEBI" id="CHEBI:140656"/>
        <dbReference type="ChEBI" id="CHEBI:140657"/>
        <dbReference type="ChEBI" id="CHEBI:140660"/>
        <dbReference type="EC" id="2.3.1.269"/>
    </reaction>
</comment>
<comment type="pathway">
    <text evidence="1">Protein modification; lipoprotein biosynthesis (N-acyl transfer).</text>
</comment>
<comment type="subcellular location">
    <subcellularLocation>
        <location evidence="1">Cell inner membrane</location>
        <topology evidence="1">Multi-pass membrane protein</topology>
    </subcellularLocation>
</comment>
<comment type="similarity">
    <text evidence="1 2">Belongs to the CN hydrolase family. Apolipoprotein N-acyltransferase subfamily.</text>
</comment>
<comment type="caution">
    <text evidence="2">Could be the product of a pseudogene.</text>
</comment>
<reference key="1">
    <citation type="journal article" date="2003" name="Nat. Genet.">
        <title>Comparative analysis of the genome sequences of Bordetella pertussis, Bordetella parapertussis and Bordetella bronchiseptica.</title>
        <authorList>
            <person name="Parkhill J."/>
            <person name="Sebaihia M."/>
            <person name="Preston A."/>
            <person name="Murphy L.D."/>
            <person name="Thomson N.R."/>
            <person name="Harris D.E."/>
            <person name="Holden M.T.G."/>
            <person name="Churcher C.M."/>
            <person name="Bentley S.D."/>
            <person name="Mungall K.L."/>
            <person name="Cerdeno-Tarraga A.-M."/>
            <person name="Temple L."/>
            <person name="James K.D."/>
            <person name="Harris B."/>
            <person name="Quail M.A."/>
            <person name="Achtman M."/>
            <person name="Atkin R."/>
            <person name="Baker S."/>
            <person name="Basham D."/>
            <person name="Bason N."/>
            <person name="Cherevach I."/>
            <person name="Chillingworth T."/>
            <person name="Collins M."/>
            <person name="Cronin A."/>
            <person name="Davis P."/>
            <person name="Doggett J."/>
            <person name="Feltwell T."/>
            <person name="Goble A."/>
            <person name="Hamlin N."/>
            <person name="Hauser H."/>
            <person name="Holroyd S."/>
            <person name="Jagels K."/>
            <person name="Leather S."/>
            <person name="Moule S."/>
            <person name="Norberczak H."/>
            <person name="O'Neil S."/>
            <person name="Ormond D."/>
            <person name="Price C."/>
            <person name="Rabbinowitsch E."/>
            <person name="Rutter S."/>
            <person name="Sanders M."/>
            <person name="Saunders D."/>
            <person name="Seeger K."/>
            <person name="Sharp S."/>
            <person name="Simmonds M."/>
            <person name="Skelton J."/>
            <person name="Squares R."/>
            <person name="Squares S."/>
            <person name="Stevens K."/>
            <person name="Unwin L."/>
            <person name="Whitehead S."/>
            <person name="Barrell B.G."/>
            <person name="Maskell D.J."/>
        </authorList>
    </citation>
    <scope>NUCLEOTIDE SEQUENCE [LARGE SCALE GENOMIC DNA]</scope>
    <source>
        <strain>12822 / ATCC BAA-587 / NCTC 13253</strain>
    </source>
</reference>
<sequence>MSPAGKGPAWRQPAILAAAGAAHALSFAPDPLPAWSLAPVQVIALAVAAHASLQAPSARRALARGWLFAMFSFSLGLYWLYVSMHDYGGLAAPLAAAGVLALSAFLALFPGLACAAARWLCPPHWDASPPARARRTLYTAATWAACWAALEWLRAVVLTGFPWLNIGYAHVDSPLAGWAPLLGVHGMALLAAFAAAALAGLWQSASGRIDSRQALAAGVALLLAGAGWLLGQFSWSRPEGKPLHLRLVQGNVEQSQKFDPALLETGLRRHLELASLPPRPGEPKPDLIILPETVLPVFQDQLPASVWDAWIEVARRADTRIAMGVPLHTQPDGATGHRYTNSVIGFDASTPVEQLRTGTTAMRYDKQHLVPWGEYVPPGFRWFVDMLDIPLGDFDRGAARQPSFDIAGQRIAFNICYEDLFGPGLLPALQDGPDGRPGATIMANVSNLGWFGNTWALRQHLQIGRLRTMETARPMVAATNTGITAAIDARGRVAAALPAGRAGVLPVAVQGMTGLTPYARFGDKPALALIGLLLIAAPALG</sequence>
<keyword id="KW-0012">Acyltransferase</keyword>
<keyword id="KW-0997">Cell inner membrane</keyword>
<keyword id="KW-1003">Cell membrane</keyword>
<keyword id="KW-0472">Membrane</keyword>
<keyword id="KW-0808">Transferase</keyword>
<keyword id="KW-0812">Transmembrane</keyword>
<keyword id="KW-1133">Transmembrane helix</keyword>
<protein>
    <recommendedName>
        <fullName>Putative apolipoprotein N-acyltransferase</fullName>
        <shortName evidence="1">ALP N-acyltransferase</shortName>
        <ecNumber evidence="1">2.3.1.269</ecNumber>
    </recommendedName>
</protein>
<organism>
    <name type="scientific">Bordetella parapertussis (strain 12822 / ATCC BAA-587 / NCTC 13253)</name>
    <dbReference type="NCBI Taxonomy" id="257311"/>
    <lineage>
        <taxon>Bacteria</taxon>
        <taxon>Pseudomonadati</taxon>
        <taxon>Pseudomonadota</taxon>
        <taxon>Betaproteobacteria</taxon>
        <taxon>Burkholderiales</taxon>
        <taxon>Alcaligenaceae</taxon>
        <taxon>Bordetella</taxon>
    </lineage>
</organism>
<evidence type="ECO:0000255" key="1">
    <source>
        <dbReference type="HAMAP-Rule" id="MF_01148"/>
    </source>
</evidence>
<evidence type="ECO:0000305" key="2"/>
<gene>
    <name evidence="1" type="primary">lnt</name>
    <name type="ordered locus">BPP1137</name>
</gene>
<accession>P61033</accession>
<proteinExistence type="uncertain"/>
<feature type="chain" id="PRO_0000178047" description="Putative apolipoprotein N-acyltransferase">
    <location>
        <begin position="1"/>
        <end position="541"/>
    </location>
</feature>
<feature type="transmembrane region" description="Helical" evidence="1">
    <location>
        <begin position="31"/>
        <end position="51"/>
    </location>
</feature>
<feature type="transmembrane region" description="Helical" evidence="1">
    <location>
        <begin position="65"/>
        <end position="85"/>
    </location>
</feature>
<feature type="transmembrane region" description="Helical" evidence="1">
    <location>
        <begin position="89"/>
        <end position="109"/>
    </location>
</feature>
<feature type="transmembrane region" description="Helical" evidence="1">
    <location>
        <begin position="144"/>
        <end position="164"/>
    </location>
</feature>
<feature type="transmembrane region" description="Helical" evidence="1">
    <location>
        <begin position="181"/>
        <end position="201"/>
    </location>
</feature>
<feature type="transmembrane region" description="Helical" evidence="1">
    <location>
        <begin position="215"/>
        <end position="235"/>
    </location>
</feature>
<feature type="domain" description="CN hydrolase" evidence="1">
    <location>
        <begin position="248"/>
        <end position="511"/>
    </location>
</feature>
<feature type="active site" description="Proton acceptor" evidence="1">
    <location>
        <position position="292"/>
    </location>
</feature>
<feature type="active site" evidence="1">
    <location>
        <position position="366"/>
    </location>
</feature>
<feature type="active site" description="Nucleophile" evidence="1">
    <location>
        <position position="416"/>
    </location>
</feature>
<dbReference type="EC" id="2.3.1.269" evidence="1"/>
<dbReference type="EMBL" id="BX640426">
    <property type="status" value="NOT_ANNOTATED_CDS"/>
    <property type="molecule type" value="Genomic_DNA"/>
</dbReference>
<dbReference type="SMR" id="P61033"/>
<dbReference type="UniPathway" id="UPA00666"/>
<dbReference type="Proteomes" id="UP000001421">
    <property type="component" value="Chromosome"/>
</dbReference>
<dbReference type="GO" id="GO:0005886">
    <property type="term" value="C:plasma membrane"/>
    <property type="evidence" value="ECO:0007669"/>
    <property type="project" value="UniProtKB-SubCell"/>
</dbReference>
<dbReference type="GO" id="GO:0016410">
    <property type="term" value="F:N-acyltransferase activity"/>
    <property type="evidence" value="ECO:0007669"/>
    <property type="project" value="UniProtKB-UniRule"/>
</dbReference>
<dbReference type="GO" id="GO:0042158">
    <property type="term" value="P:lipoprotein biosynthetic process"/>
    <property type="evidence" value="ECO:0007669"/>
    <property type="project" value="UniProtKB-UniRule"/>
</dbReference>
<dbReference type="CDD" id="cd07571">
    <property type="entry name" value="ALP_N-acyl_transferase"/>
    <property type="match status" value="1"/>
</dbReference>
<dbReference type="Gene3D" id="3.60.110.10">
    <property type="entry name" value="Carbon-nitrogen hydrolase"/>
    <property type="match status" value="1"/>
</dbReference>
<dbReference type="HAMAP" id="MF_01148">
    <property type="entry name" value="Lnt"/>
    <property type="match status" value="1"/>
</dbReference>
<dbReference type="InterPro" id="IPR004563">
    <property type="entry name" value="Apolipo_AcylTrfase"/>
</dbReference>
<dbReference type="InterPro" id="IPR003010">
    <property type="entry name" value="C-N_Hydrolase"/>
</dbReference>
<dbReference type="InterPro" id="IPR036526">
    <property type="entry name" value="C-N_Hydrolase_sf"/>
</dbReference>
<dbReference type="InterPro" id="IPR045378">
    <property type="entry name" value="LNT_N"/>
</dbReference>
<dbReference type="NCBIfam" id="TIGR00546">
    <property type="entry name" value="lnt"/>
    <property type="match status" value="1"/>
</dbReference>
<dbReference type="PANTHER" id="PTHR38686">
    <property type="entry name" value="APOLIPOPROTEIN N-ACYLTRANSFERASE"/>
    <property type="match status" value="1"/>
</dbReference>
<dbReference type="PANTHER" id="PTHR38686:SF1">
    <property type="entry name" value="APOLIPOPROTEIN N-ACYLTRANSFERASE"/>
    <property type="match status" value="1"/>
</dbReference>
<dbReference type="Pfam" id="PF00795">
    <property type="entry name" value="CN_hydrolase"/>
    <property type="match status" value="1"/>
</dbReference>
<dbReference type="Pfam" id="PF20154">
    <property type="entry name" value="LNT_N"/>
    <property type="match status" value="1"/>
</dbReference>
<dbReference type="SUPFAM" id="SSF56317">
    <property type="entry name" value="Carbon-nitrogen hydrolase"/>
    <property type="match status" value="1"/>
</dbReference>
<dbReference type="PROSITE" id="PS50263">
    <property type="entry name" value="CN_HYDROLASE"/>
    <property type="match status" value="1"/>
</dbReference>